<sequence length="353" mass="38355">MKMFITMSMCLSVIACFYAGVGTGETLVPALIIMGDSVVDAGNNNHRITLVKANFPPYGRDFVAHSATGRFSNGKLATDFTAENLGFTSYPVAYLSQEANETNLLTGANFASGASGFDDATAIFYNAITLSQQLKNYKEYQNKVTNIVGKERANEIFSGAIHLLSTGSSDFLQSYYINPILNRIFTPDQYSDHLLRSYSTFVQNLYGLGARRIGVTTLPPLGCLPAAITLFGGVGNNMCVERLNQDAVSFNTKLNNTSINLTNNLPGLKLVVFDIYNPLLNMVINPVEYGFFESRRACCGTGTMETSFLCNALSVGTCSNATNYVFWDGFHPSEAANRVIANNLLVQGIPLIS</sequence>
<proteinExistence type="inferred from homology"/>
<feature type="signal peptide" evidence="2">
    <location>
        <begin position="1"/>
        <end position="24"/>
    </location>
</feature>
<feature type="chain" id="PRO_0000367412" description="GDSL esterase/lipase At5g03810">
    <location>
        <begin position="25"/>
        <end position="353"/>
    </location>
</feature>
<feature type="active site" description="Nucleophile" evidence="1">
    <location>
        <position position="37"/>
    </location>
</feature>
<feature type="active site" evidence="1">
    <location>
        <position position="328"/>
    </location>
</feature>
<feature type="active site" evidence="1">
    <location>
        <position position="331"/>
    </location>
</feature>
<feature type="glycosylation site" description="N-linked (GlcNAc...) asparagine" evidence="2">
    <location>
        <position position="100"/>
    </location>
</feature>
<feature type="glycosylation site" description="N-linked (GlcNAc...) asparagine" evidence="2">
    <location>
        <position position="255"/>
    </location>
</feature>
<feature type="glycosylation site" description="N-linked (GlcNAc...) asparagine" evidence="2">
    <location>
        <position position="256"/>
    </location>
</feature>
<feature type="glycosylation site" description="N-linked (GlcNAc...) asparagine" evidence="2">
    <location>
        <position position="260"/>
    </location>
</feature>
<feature type="glycosylation site" description="N-linked (GlcNAc...) asparagine" evidence="2">
    <location>
        <position position="320"/>
    </location>
</feature>
<feature type="sequence variant" description="In strain: cv. Bla-10, cv. Chi-1, cv. Cvi-0, cv. Di-G, cv. Gr-3, cv. Landsberg erecta, cv. Li-3, cv. Mt-0, cv. PHW-1 and cv. Sha." evidence="3">
    <original>E</original>
    <variation>D</variation>
    <location>
        <position position="98"/>
    </location>
</feature>
<feature type="sequence variant" description="In strain: cv. Bla-10." evidence="3">
    <original>K</original>
    <variation>T</variation>
    <location>
        <position position="150"/>
    </location>
</feature>
<feature type="sequence variant" description="In strain: cv. Bla-10, cv. Chi-1, cv. Co-1, cv. Cvi-0, cv. Di-G, cv. Gr-3, cv. Landsberg erecta, cv. Li-3, cv. Mt-0, cv. PHW-32 and cv. Sha." evidence="3">
    <original>H</original>
    <variation>R</variation>
    <location>
        <position position="193"/>
    </location>
</feature>
<dbReference type="EC" id="3.1.1.-"/>
<dbReference type="EMBL" id="AB005235">
    <property type="protein sequence ID" value="BAB08607.1"/>
    <property type="molecule type" value="Genomic_DNA"/>
</dbReference>
<dbReference type="EMBL" id="AL162873">
    <property type="protein sequence ID" value="CAB85501.1"/>
    <property type="status" value="ALT_SEQ"/>
    <property type="molecule type" value="Genomic_DNA"/>
</dbReference>
<dbReference type="EMBL" id="CP002688">
    <property type="protein sequence ID" value="AED90657.1"/>
    <property type="molecule type" value="Genomic_DNA"/>
</dbReference>
<dbReference type="EMBL" id="EU352030">
    <property type="protein sequence ID" value="ABZ85648.1"/>
    <property type="molecule type" value="Genomic_DNA"/>
</dbReference>
<dbReference type="EMBL" id="EU352031">
    <property type="protein sequence ID" value="ABZ85649.1"/>
    <property type="molecule type" value="Genomic_DNA"/>
</dbReference>
<dbReference type="EMBL" id="EU352032">
    <property type="protein sequence ID" value="ABZ85650.1"/>
    <property type="molecule type" value="Genomic_DNA"/>
</dbReference>
<dbReference type="EMBL" id="EU352033">
    <property type="protein sequence ID" value="ABZ85651.1"/>
    <property type="molecule type" value="Genomic_DNA"/>
</dbReference>
<dbReference type="EMBL" id="EU352034">
    <property type="protein sequence ID" value="ABZ85652.1"/>
    <property type="molecule type" value="Genomic_DNA"/>
</dbReference>
<dbReference type="EMBL" id="EU352035">
    <property type="protein sequence ID" value="ABZ85653.1"/>
    <property type="molecule type" value="Genomic_DNA"/>
</dbReference>
<dbReference type="EMBL" id="EU352036">
    <property type="protein sequence ID" value="ABZ85654.1"/>
    <property type="molecule type" value="Genomic_DNA"/>
</dbReference>
<dbReference type="EMBL" id="EU352037">
    <property type="protein sequence ID" value="ABZ85655.1"/>
    <property type="molecule type" value="Genomic_DNA"/>
</dbReference>
<dbReference type="EMBL" id="EU352038">
    <property type="protein sequence ID" value="ABZ85656.1"/>
    <property type="molecule type" value="Genomic_DNA"/>
</dbReference>
<dbReference type="EMBL" id="EU352039">
    <property type="protein sequence ID" value="ABZ85657.1"/>
    <property type="molecule type" value="Genomic_DNA"/>
</dbReference>
<dbReference type="EMBL" id="EU352040">
    <property type="protein sequence ID" value="ABZ85658.1"/>
    <property type="molecule type" value="Genomic_DNA"/>
</dbReference>
<dbReference type="EMBL" id="EU352041">
    <property type="protein sequence ID" value="ABZ85659.1"/>
    <property type="molecule type" value="Genomic_DNA"/>
</dbReference>
<dbReference type="EMBL" id="EU352042">
    <property type="protein sequence ID" value="ABZ85660.1"/>
    <property type="molecule type" value="Genomic_DNA"/>
</dbReference>
<dbReference type="EMBL" id="EU352043">
    <property type="protein sequence ID" value="ABZ85661.1"/>
    <property type="molecule type" value="Genomic_DNA"/>
</dbReference>
<dbReference type="PIR" id="T48408">
    <property type="entry name" value="T48408"/>
</dbReference>
<dbReference type="RefSeq" id="NP_196001.2">
    <property type="nucleotide sequence ID" value="NM_120462.2"/>
</dbReference>
<dbReference type="SMR" id="Q9FFN0"/>
<dbReference type="FunCoup" id="Q9FFN0">
    <property type="interactions" value="101"/>
</dbReference>
<dbReference type="STRING" id="3702.Q9FFN0"/>
<dbReference type="GlyGen" id="Q9FFN0">
    <property type="glycosylation" value="5 sites"/>
</dbReference>
<dbReference type="PaxDb" id="3702-AT5G03810.1"/>
<dbReference type="ProteomicsDB" id="221988"/>
<dbReference type="EnsemblPlants" id="AT5G03810.1">
    <property type="protein sequence ID" value="AT5G03810.1"/>
    <property type="gene ID" value="AT5G03810"/>
</dbReference>
<dbReference type="GeneID" id="831715"/>
<dbReference type="Gramene" id="AT5G03810.1">
    <property type="protein sequence ID" value="AT5G03810.1"/>
    <property type="gene ID" value="AT5G03810"/>
</dbReference>
<dbReference type="KEGG" id="ath:AT5G03810"/>
<dbReference type="Araport" id="AT5G03810"/>
<dbReference type="TAIR" id="AT5G03810"/>
<dbReference type="eggNOG" id="KOG0017">
    <property type="taxonomic scope" value="Eukaryota"/>
</dbReference>
<dbReference type="HOGENOM" id="CLU_015101_0_1_1"/>
<dbReference type="InParanoid" id="Q9FFN0"/>
<dbReference type="OMA" id="NSQSHAI"/>
<dbReference type="PhylomeDB" id="Q9FFN0"/>
<dbReference type="BioCyc" id="ARA:AT5G03810-MONOMER"/>
<dbReference type="PRO" id="PR:Q9FFN0"/>
<dbReference type="Proteomes" id="UP000006548">
    <property type="component" value="Chromosome 5"/>
</dbReference>
<dbReference type="ExpressionAtlas" id="Q9FFN0">
    <property type="expression patterns" value="baseline and differential"/>
</dbReference>
<dbReference type="GO" id="GO:0005576">
    <property type="term" value="C:extracellular region"/>
    <property type="evidence" value="ECO:0007669"/>
    <property type="project" value="UniProtKB-SubCell"/>
</dbReference>
<dbReference type="GO" id="GO:0016298">
    <property type="term" value="F:lipase activity"/>
    <property type="evidence" value="ECO:0007669"/>
    <property type="project" value="InterPro"/>
</dbReference>
<dbReference type="GO" id="GO:0016042">
    <property type="term" value="P:lipid catabolic process"/>
    <property type="evidence" value="ECO:0007669"/>
    <property type="project" value="UniProtKB-KW"/>
</dbReference>
<dbReference type="CDD" id="cd01837">
    <property type="entry name" value="SGNH_plant_lipase_like"/>
    <property type="match status" value="1"/>
</dbReference>
<dbReference type="FunFam" id="3.40.50.1110:FF:000003">
    <property type="entry name" value="GDSL esterase/lipase APG"/>
    <property type="match status" value="1"/>
</dbReference>
<dbReference type="Gene3D" id="3.40.50.1110">
    <property type="entry name" value="SGNH hydrolase"/>
    <property type="match status" value="1"/>
</dbReference>
<dbReference type="InterPro" id="IPR001087">
    <property type="entry name" value="GDSL"/>
</dbReference>
<dbReference type="InterPro" id="IPR050592">
    <property type="entry name" value="GDSL_lipolytic_enzyme"/>
</dbReference>
<dbReference type="InterPro" id="IPR008265">
    <property type="entry name" value="Lipase_GDSL_AS"/>
</dbReference>
<dbReference type="InterPro" id="IPR036514">
    <property type="entry name" value="SGNH_hydro_sf"/>
</dbReference>
<dbReference type="InterPro" id="IPR035669">
    <property type="entry name" value="SGNH_plant_lipase-like"/>
</dbReference>
<dbReference type="PANTHER" id="PTHR45642">
    <property type="entry name" value="GDSL ESTERASE/LIPASE EXL3"/>
    <property type="match status" value="1"/>
</dbReference>
<dbReference type="PANTHER" id="PTHR45642:SF103">
    <property type="entry name" value="ZINC FINGER PROTEIN"/>
    <property type="match status" value="1"/>
</dbReference>
<dbReference type="Pfam" id="PF00657">
    <property type="entry name" value="Lipase_GDSL"/>
    <property type="match status" value="1"/>
</dbReference>
<dbReference type="SUPFAM" id="SSF52266">
    <property type="entry name" value="SGNH hydrolase"/>
    <property type="match status" value="1"/>
</dbReference>
<dbReference type="PROSITE" id="PS01098">
    <property type="entry name" value="LIPASE_GDSL_SER"/>
    <property type="match status" value="1"/>
</dbReference>
<protein>
    <recommendedName>
        <fullName>GDSL esterase/lipase At5g03810</fullName>
        <ecNumber>3.1.1.-</ecNumber>
    </recommendedName>
    <alternativeName>
        <fullName>Extracellular lipase At5g03810</fullName>
    </alternativeName>
</protein>
<name>GDL72_ARATH</name>
<accession>Q9FFN0</accession>
<accession>B0ZCL3</accession>
<accession>B0ZCL4</accession>
<accession>B0ZCL9</accession>
<accession>B0ZCM0</accession>
<accession>B0ZCM2</accession>
<accession>Q9LZC6</accession>
<evidence type="ECO:0000250" key="1"/>
<evidence type="ECO:0000255" key="2"/>
<evidence type="ECO:0000269" key="3">
    <source>
    </source>
</evidence>
<evidence type="ECO:0000305" key="4"/>
<comment type="subcellular location">
    <subcellularLocation>
        <location evidence="4">Secreted</location>
    </subcellularLocation>
</comment>
<comment type="similarity">
    <text evidence="4">Belongs to the 'GDSL' lipolytic enzyme family.</text>
</comment>
<comment type="sequence caution" evidence="4">
    <conflict type="erroneous gene model prediction">
        <sequence resource="EMBL-CDS" id="CAB85501"/>
    </conflict>
</comment>
<reference key="1">
    <citation type="journal article" date="1997" name="DNA Res.">
        <title>Structural analysis of Arabidopsis thaliana chromosome 5. I. Sequence features of the 1.6 Mb regions covered by twenty physically assigned P1 clones.</title>
        <authorList>
            <person name="Sato S."/>
            <person name="Kotani H."/>
            <person name="Nakamura Y."/>
            <person name="Kaneko T."/>
            <person name="Asamizu E."/>
            <person name="Fukami M."/>
            <person name="Miyajima N."/>
            <person name="Tabata S."/>
        </authorList>
    </citation>
    <scope>NUCLEOTIDE SEQUENCE [LARGE SCALE GENOMIC DNA]</scope>
    <source>
        <strain>cv. Columbia</strain>
    </source>
</reference>
<reference key="2">
    <citation type="journal article" date="2000" name="Nature">
        <title>Sequence and analysis of chromosome 5 of the plant Arabidopsis thaliana.</title>
        <authorList>
            <person name="Tabata S."/>
            <person name="Kaneko T."/>
            <person name="Nakamura Y."/>
            <person name="Kotani H."/>
            <person name="Kato T."/>
            <person name="Asamizu E."/>
            <person name="Miyajima N."/>
            <person name="Sasamoto S."/>
            <person name="Kimura T."/>
            <person name="Hosouchi T."/>
            <person name="Kawashima K."/>
            <person name="Kohara M."/>
            <person name="Matsumoto M."/>
            <person name="Matsuno A."/>
            <person name="Muraki A."/>
            <person name="Nakayama S."/>
            <person name="Nakazaki N."/>
            <person name="Naruo K."/>
            <person name="Okumura S."/>
            <person name="Shinpo S."/>
            <person name="Takeuchi C."/>
            <person name="Wada T."/>
            <person name="Watanabe A."/>
            <person name="Yamada M."/>
            <person name="Yasuda M."/>
            <person name="Sato S."/>
            <person name="de la Bastide M."/>
            <person name="Huang E."/>
            <person name="Spiegel L."/>
            <person name="Gnoj L."/>
            <person name="O'Shaughnessy A."/>
            <person name="Preston R."/>
            <person name="Habermann K."/>
            <person name="Murray J."/>
            <person name="Johnson D."/>
            <person name="Rohlfing T."/>
            <person name="Nelson J."/>
            <person name="Stoneking T."/>
            <person name="Pepin K."/>
            <person name="Spieth J."/>
            <person name="Sekhon M."/>
            <person name="Armstrong J."/>
            <person name="Becker M."/>
            <person name="Belter E."/>
            <person name="Cordum H."/>
            <person name="Cordes M."/>
            <person name="Courtney L."/>
            <person name="Courtney W."/>
            <person name="Dante M."/>
            <person name="Du H."/>
            <person name="Edwards J."/>
            <person name="Fryman J."/>
            <person name="Haakensen B."/>
            <person name="Lamar E."/>
            <person name="Latreille P."/>
            <person name="Leonard S."/>
            <person name="Meyer R."/>
            <person name="Mulvaney E."/>
            <person name="Ozersky P."/>
            <person name="Riley A."/>
            <person name="Strowmatt C."/>
            <person name="Wagner-McPherson C."/>
            <person name="Wollam A."/>
            <person name="Yoakum M."/>
            <person name="Bell M."/>
            <person name="Dedhia N."/>
            <person name="Parnell L."/>
            <person name="Shah R."/>
            <person name="Rodriguez M."/>
            <person name="Hoon See L."/>
            <person name="Vil D."/>
            <person name="Baker J."/>
            <person name="Kirchoff K."/>
            <person name="Toth K."/>
            <person name="King L."/>
            <person name="Bahret A."/>
            <person name="Miller B."/>
            <person name="Marra M.A."/>
            <person name="Martienssen R."/>
            <person name="McCombie W.R."/>
            <person name="Wilson R.K."/>
            <person name="Murphy G."/>
            <person name="Bancroft I."/>
            <person name="Volckaert G."/>
            <person name="Wambutt R."/>
            <person name="Duesterhoeft A."/>
            <person name="Stiekema W."/>
            <person name="Pohl T."/>
            <person name="Entian K.-D."/>
            <person name="Terryn N."/>
            <person name="Hartley N."/>
            <person name="Bent E."/>
            <person name="Johnson S."/>
            <person name="Langham S.-A."/>
            <person name="McCullagh B."/>
            <person name="Robben J."/>
            <person name="Grymonprez B."/>
            <person name="Zimmermann W."/>
            <person name="Ramsperger U."/>
            <person name="Wedler H."/>
            <person name="Balke K."/>
            <person name="Wedler E."/>
            <person name="Peters S."/>
            <person name="van Staveren M."/>
            <person name="Dirkse W."/>
            <person name="Mooijman P."/>
            <person name="Klein Lankhorst R."/>
            <person name="Weitzenegger T."/>
            <person name="Bothe G."/>
            <person name="Rose M."/>
            <person name="Hauf J."/>
            <person name="Berneiser S."/>
            <person name="Hempel S."/>
            <person name="Feldpausch M."/>
            <person name="Lamberth S."/>
            <person name="Villarroel R."/>
            <person name="Gielen J."/>
            <person name="Ardiles W."/>
            <person name="Bents O."/>
            <person name="Lemcke K."/>
            <person name="Kolesov G."/>
            <person name="Mayer K.F.X."/>
            <person name="Rudd S."/>
            <person name="Schoof H."/>
            <person name="Schueller C."/>
            <person name="Zaccaria P."/>
            <person name="Mewes H.-W."/>
            <person name="Bevan M."/>
            <person name="Fransz P.F."/>
        </authorList>
    </citation>
    <scope>NUCLEOTIDE SEQUENCE [LARGE SCALE GENOMIC DNA]</scope>
    <source>
        <strain>cv. Columbia</strain>
    </source>
</reference>
<reference key="3">
    <citation type="journal article" date="2017" name="Plant J.">
        <title>Araport11: a complete reannotation of the Arabidopsis thaliana reference genome.</title>
        <authorList>
            <person name="Cheng C.Y."/>
            <person name="Krishnakumar V."/>
            <person name="Chan A.P."/>
            <person name="Thibaud-Nissen F."/>
            <person name="Schobel S."/>
            <person name="Town C.D."/>
        </authorList>
    </citation>
    <scope>GENOME REANNOTATION</scope>
    <source>
        <strain>cv. Columbia</strain>
    </source>
</reference>
<reference key="4">
    <citation type="journal article" date="2008" name="J. Mol. Evol.">
        <title>Local patterns of nucleotide polymorphism are highly variable in the selfing species Arabidopsis thaliana.</title>
        <authorList>
            <person name="Moore R.C."/>
            <person name="Stevens M.H.H."/>
        </authorList>
    </citation>
    <scope>NUCLEOTIDE SEQUENCE [GENOMIC DNA] OF 38-289</scope>
    <scope>VARIANTS ASP-98; THR-150 AND ARG-193</scope>
    <source>
        <strain>cv. Bla-10</strain>
        <strain>cv. Chi-1</strain>
        <strain>cv. Co-1</strain>
        <strain>cv. Columbia</strain>
        <strain>cv. Cvi-0</strain>
        <strain>cv. Da(1)-12</strain>
        <strain>cv. Di-G</strain>
        <strain>cv. Gr-3</strain>
        <strain>cv. Landsberg erecta</strain>
        <strain>cv. Li-3</strain>
        <strain>cv. Mt-0</strain>
        <strain>cv. PHW-1</strain>
        <strain>cv. PHW-32</strain>
        <strain>cv. Sha</strain>
    </source>
</reference>
<reference key="5">
    <citation type="journal article" date="2004" name="Prog. Lipid Res.">
        <title>GDSL family of serine esterases/lipases.</title>
        <authorList>
            <person name="Akoh C.C."/>
            <person name="Lee G.-C."/>
            <person name="Liaw Y.-C."/>
            <person name="Huang T.-H."/>
            <person name="Shaw J.-F."/>
        </authorList>
    </citation>
    <scope>REVIEW</scope>
</reference>
<reference key="6">
    <citation type="journal article" date="2008" name="Pak. J. Biol. Sci.">
        <title>Sequence analysis of GDSL lipase gene family in Arabidopsis thaliana.</title>
        <authorList>
            <person name="Ling H."/>
        </authorList>
    </citation>
    <scope>GENE FAMILY</scope>
</reference>
<organism>
    <name type="scientific">Arabidopsis thaliana</name>
    <name type="common">Mouse-ear cress</name>
    <dbReference type="NCBI Taxonomy" id="3702"/>
    <lineage>
        <taxon>Eukaryota</taxon>
        <taxon>Viridiplantae</taxon>
        <taxon>Streptophyta</taxon>
        <taxon>Embryophyta</taxon>
        <taxon>Tracheophyta</taxon>
        <taxon>Spermatophyta</taxon>
        <taxon>Magnoliopsida</taxon>
        <taxon>eudicotyledons</taxon>
        <taxon>Gunneridae</taxon>
        <taxon>Pentapetalae</taxon>
        <taxon>rosids</taxon>
        <taxon>malvids</taxon>
        <taxon>Brassicales</taxon>
        <taxon>Brassicaceae</taxon>
        <taxon>Camelineae</taxon>
        <taxon>Arabidopsis</taxon>
    </lineage>
</organism>
<gene>
    <name type="ordered locus">At5g03810</name>
    <name type="ORF">F8F6.20</name>
    <name type="ORF">MED24.11</name>
</gene>
<keyword id="KW-0325">Glycoprotein</keyword>
<keyword id="KW-0378">Hydrolase</keyword>
<keyword id="KW-0442">Lipid degradation</keyword>
<keyword id="KW-0443">Lipid metabolism</keyword>
<keyword id="KW-1185">Reference proteome</keyword>
<keyword id="KW-0964">Secreted</keyword>
<keyword id="KW-0732">Signal</keyword>